<accession>B1I9N0</accession>
<comment type="function">
    <text evidence="1">Increases the formation of ribosomal termination complexes and stimulates activities of RF-1 and RF-2. It binds guanine nucleotides and has strong preference for UGA stop codons. It may interact directly with the ribosome. The stimulation of RF-1 and RF-2 is significantly reduced by GTP and GDP, but not by GMP.</text>
</comment>
<comment type="subcellular location">
    <subcellularLocation>
        <location evidence="1">Cytoplasm</location>
    </subcellularLocation>
</comment>
<comment type="similarity">
    <text evidence="1">Belongs to the TRAFAC class translation factor GTPase superfamily. Classic translation factor GTPase family. PrfC subfamily.</text>
</comment>
<dbReference type="EMBL" id="CP000936">
    <property type="protein sequence ID" value="ACA36729.1"/>
    <property type="molecule type" value="Genomic_DNA"/>
</dbReference>
<dbReference type="RefSeq" id="WP_001025432.1">
    <property type="nucleotide sequence ID" value="NC_010380.1"/>
</dbReference>
<dbReference type="SMR" id="B1I9N0"/>
<dbReference type="KEGG" id="spv:SPH_0545"/>
<dbReference type="HOGENOM" id="CLU_002794_2_1_9"/>
<dbReference type="Proteomes" id="UP000002163">
    <property type="component" value="Chromosome"/>
</dbReference>
<dbReference type="GO" id="GO:0005829">
    <property type="term" value="C:cytosol"/>
    <property type="evidence" value="ECO:0007669"/>
    <property type="project" value="TreeGrafter"/>
</dbReference>
<dbReference type="GO" id="GO:0005525">
    <property type="term" value="F:GTP binding"/>
    <property type="evidence" value="ECO:0007669"/>
    <property type="project" value="UniProtKB-UniRule"/>
</dbReference>
<dbReference type="GO" id="GO:0003924">
    <property type="term" value="F:GTPase activity"/>
    <property type="evidence" value="ECO:0007669"/>
    <property type="project" value="InterPro"/>
</dbReference>
<dbReference type="GO" id="GO:0016150">
    <property type="term" value="F:translation release factor activity, codon nonspecific"/>
    <property type="evidence" value="ECO:0007669"/>
    <property type="project" value="TreeGrafter"/>
</dbReference>
<dbReference type="GO" id="GO:0016149">
    <property type="term" value="F:translation release factor activity, codon specific"/>
    <property type="evidence" value="ECO:0007669"/>
    <property type="project" value="UniProtKB-UniRule"/>
</dbReference>
<dbReference type="GO" id="GO:0006449">
    <property type="term" value="P:regulation of translational termination"/>
    <property type="evidence" value="ECO:0007669"/>
    <property type="project" value="UniProtKB-UniRule"/>
</dbReference>
<dbReference type="CDD" id="cd04169">
    <property type="entry name" value="RF3"/>
    <property type="match status" value="1"/>
</dbReference>
<dbReference type="CDD" id="cd16259">
    <property type="entry name" value="RF3_III"/>
    <property type="match status" value="1"/>
</dbReference>
<dbReference type="FunFam" id="2.40.30.10:FF:000040">
    <property type="entry name" value="Peptide chain release factor 3"/>
    <property type="match status" value="1"/>
</dbReference>
<dbReference type="FunFam" id="3.30.70.3280:FF:000001">
    <property type="entry name" value="Peptide chain release factor 3"/>
    <property type="match status" value="1"/>
</dbReference>
<dbReference type="FunFam" id="3.40.50.300:FF:000542">
    <property type="entry name" value="Peptide chain release factor 3"/>
    <property type="match status" value="1"/>
</dbReference>
<dbReference type="Gene3D" id="3.40.50.300">
    <property type="entry name" value="P-loop containing nucleotide triphosphate hydrolases"/>
    <property type="match status" value="1"/>
</dbReference>
<dbReference type="Gene3D" id="3.30.70.3280">
    <property type="entry name" value="Peptide chain release factor 3, domain III"/>
    <property type="match status" value="1"/>
</dbReference>
<dbReference type="Gene3D" id="2.40.30.10">
    <property type="entry name" value="Translation factors"/>
    <property type="match status" value="1"/>
</dbReference>
<dbReference type="HAMAP" id="MF_00072">
    <property type="entry name" value="Rel_fac_3"/>
    <property type="match status" value="1"/>
</dbReference>
<dbReference type="InterPro" id="IPR053905">
    <property type="entry name" value="EF-G-like_DII"/>
</dbReference>
<dbReference type="InterPro" id="IPR035647">
    <property type="entry name" value="EFG_III/V"/>
</dbReference>
<dbReference type="InterPro" id="IPR031157">
    <property type="entry name" value="G_TR_CS"/>
</dbReference>
<dbReference type="InterPro" id="IPR027417">
    <property type="entry name" value="P-loop_NTPase"/>
</dbReference>
<dbReference type="InterPro" id="IPR004548">
    <property type="entry name" value="PrfC"/>
</dbReference>
<dbReference type="InterPro" id="IPR032090">
    <property type="entry name" value="RF3_C"/>
</dbReference>
<dbReference type="InterPro" id="IPR038467">
    <property type="entry name" value="RF3_dom_3_sf"/>
</dbReference>
<dbReference type="InterPro" id="IPR041732">
    <property type="entry name" value="RF3_GTP-bd"/>
</dbReference>
<dbReference type="InterPro" id="IPR005225">
    <property type="entry name" value="Small_GTP-bd"/>
</dbReference>
<dbReference type="InterPro" id="IPR000795">
    <property type="entry name" value="T_Tr_GTP-bd_dom"/>
</dbReference>
<dbReference type="InterPro" id="IPR009000">
    <property type="entry name" value="Transl_B-barrel_sf"/>
</dbReference>
<dbReference type="NCBIfam" id="TIGR00503">
    <property type="entry name" value="prfC"/>
    <property type="match status" value="1"/>
</dbReference>
<dbReference type="NCBIfam" id="NF001964">
    <property type="entry name" value="PRK00741.1"/>
    <property type="match status" value="1"/>
</dbReference>
<dbReference type="NCBIfam" id="TIGR00231">
    <property type="entry name" value="small_GTP"/>
    <property type="match status" value="1"/>
</dbReference>
<dbReference type="PANTHER" id="PTHR43556">
    <property type="entry name" value="PEPTIDE CHAIN RELEASE FACTOR RF3"/>
    <property type="match status" value="1"/>
</dbReference>
<dbReference type="PANTHER" id="PTHR43556:SF2">
    <property type="entry name" value="PEPTIDE CHAIN RELEASE FACTOR RF3"/>
    <property type="match status" value="1"/>
</dbReference>
<dbReference type="Pfam" id="PF22042">
    <property type="entry name" value="EF-G_D2"/>
    <property type="match status" value="1"/>
</dbReference>
<dbReference type="Pfam" id="PF00009">
    <property type="entry name" value="GTP_EFTU"/>
    <property type="match status" value="1"/>
</dbReference>
<dbReference type="Pfam" id="PF16658">
    <property type="entry name" value="RF3_C"/>
    <property type="match status" value="1"/>
</dbReference>
<dbReference type="PRINTS" id="PR00315">
    <property type="entry name" value="ELONGATNFCT"/>
</dbReference>
<dbReference type="PRINTS" id="PR01037">
    <property type="entry name" value="TCRTETOQM"/>
</dbReference>
<dbReference type="SUPFAM" id="SSF54980">
    <property type="entry name" value="EF-G C-terminal domain-like"/>
    <property type="match status" value="1"/>
</dbReference>
<dbReference type="SUPFAM" id="SSF52540">
    <property type="entry name" value="P-loop containing nucleoside triphosphate hydrolases"/>
    <property type="match status" value="1"/>
</dbReference>
<dbReference type="SUPFAM" id="SSF50447">
    <property type="entry name" value="Translation proteins"/>
    <property type="match status" value="1"/>
</dbReference>
<dbReference type="PROSITE" id="PS00301">
    <property type="entry name" value="G_TR_1"/>
    <property type="match status" value="1"/>
</dbReference>
<dbReference type="PROSITE" id="PS51722">
    <property type="entry name" value="G_TR_2"/>
    <property type="match status" value="1"/>
</dbReference>
<keyword id="KW-0963">Cytoplasm</keyword>
<keyword id="KW-0342">GTP-binding</keyword>
<keyword id="KW-0547">Nucleotide-binding</keyword>
<keyword id="KW-0648">Protein biosynthesis</keyword>
<evidence type="ECO:0000255" key="1">
    <source>
        <dbReference type="HAMAP-Rule" id="MF_00072"/>
    </source>
</evidence>
<protein>
    <recommendedName>
        <fullName evidence="1">Peptide chain release factor 3</fullName>
        <shortName evidence="1">RF-3</shortName>
    </recommendedName>
</protein>
<organism>
    <name type="scientific">Streptococcus pneumoniae (strain Hungary19A-6)</name>
    <dbReference type="NCBI Taxonomy" id="487214"/>
    <lineage>
        <taxon>Bacteria</taxon>
        <taxon>Bacillati</taxon>
        <taxon>Bacillota</taxon>
        <taxon>Bacilli</taxon>
        <taxon>Lactobacillales</taxon>
        <taxon>Streptococcaceae</taxon>
        <taxon>Streptococcus</taxon>
    </lineage>
</organism>
<name>RF3_STRPI</name>
<reference key="1">
    <citation type="journal article" date="2010" name="Genome Biol.">
        <title>Structure and dynamics of the pan-genome of Streptococcus pneumoniae and closely related species.</title>
        <authorList>
            <person name="Donati C."/>
            <person name="Hiller N.L."/>
            <person name="Tettelin H."/>
            <person name="Muzzi A."/>
            <person name="Croucher N.J."/>
            <person name="Angiuoli S.V."/>
            <person name="Oggioni M."/>
            <person name="Dunning Hotopp J.C."/>
            <person name="Hu F.Z."/>
            <person name="Riley D.R."/>
            <person name="Covacci A."/>
            <person name="Mitchell T.J."/>
            <person name="Bentley S.D."/>
            <person name="Kilian M."/>
            <person name="Ehrlich G.D."/>
            <person name="Rappuoli R."/>
            <person name="Moxon E.R."/>
            <person name="Masignani V."/>
        </authorList>
    </citation>
    <scope>NUCLEOTIDE SEQUENCE [LARGE SCALE GENOMIC DNA]</scope>
    <source>
        <strain>Hungary19A-6</strain>
    </source>
</reference>
<feature type="chain" id="PRO_1000092506" description="Peptide chain release factor 3">
    <location>
        <begin position="1"/>
        <end position="514"/>
    </location>
</feature>
<feature type="domain" description="tr-type G">
    <location>
        <begin position="8"/>
        <end position="268"/>
    </location>
</feature>
<feature type="binding site" evidence="1">
    <location>
        <begin position="17"/>
        <end position="24"/>
    </location>
    <ligand>
        <name>GTP</name>
        <dbReference type="ChEBI" id="CHEBI:37565"/>
    </ligand>
</feature>
<feature type="binding site" evidence="1">
    <location>
        <begin position="85"/>
        <end position="89"/>
    </location>
    <ligand>
        <name>GTP</name>
        <dbReference type="ChEBI" id="CHEBI:37565"/>
    </ligand>
</feature>
<feature type="binding site" evidence="1">
    <location>
        <begin position="139"/>
        <end position="142"/>
    </location>
    <ligand>
        <name>GTP</name>
        <dbReference type="ChEBI" id="CHEBI:37565"/>
    </ligand>
</feature>
<sequence>MNIQEEIKKRRTFAIISHPDAGKTTITEQLLYFGGEIREAGTVKGKKTGTFAKSDWMDIEKQRGISVTSSVMQFDYDGKRVNILDTPGHEDFSEDTYRTLMAVDAAVMVVDSAKGIEAQTKKLFEVVKHRGIPVFTFMNKLDRDGREPLDLLQELEEILGIASYPMNWPIGMGKAFEGLYDLYNQRLELYKGDERFASLEDGDKLFGSNPFYEQVKDDIELLNEAGNEFSEEAILAGELTPVFFGSALTNFGVQTFLETFLKFAPEPHGHKKTDGEIVDPYDKDFSGFVFKIQANMDPRHRDRIAFVRIVSGEFERGMSVNLPRTGKGAKLSNVTQFMAESRENVTNAVAGDIIGVYDTGTYQVGDTLTVGKNKFEFEPLPTFTPEIFMKVSAKNVMKQKSFHKGIEQLVQEGAVQLYKNYQTSEYMLGAVGQLQFEVFKHRMEGEYNAEVVMSPMGKKTVRWIKPEDLDERMSSSRNILAKDRFDQPVFLFENDFALRWFADKYPDVELEEKM</sequence>
<proteinExistence type="inferred from homology"/>
<gene>
    <name evidence="1" type="primary">prfC</name>
    <name type="ordered locus">SPH_0545</name>
</gene>